<gene>
    <name evidence="1" type="primary">fhs</name>
    <name type="ordered locus">EUBREC_1958</name>
</gene>
<accession>C4ZBG8</accession>
<name>FTHS_AGARV</name>
<reference key="1">
    <citation type="journal article" date="2009" name="Proc. Natl. Acad. Sci. U.S.A.">
        <title>Characterizing a model human gut microbiota composed of members of its two dominant bacterial phyla.</title>
        <authorList>
            <person name="Mahowald M.A."/>
            <person name="Rey F.E."/>
            <person name="Seedorf H."/>
            <person name="Turnbaugh P.J."/>
            <person name="Fulton R.S."/>
            <person name="Wollam A."/>
            <person name="Shah N."/>
            <person name="Wang C."/>
            <person name="Magrini V."/>
            <person name="Wilson R.K."/>
            <person name="Cantarel B.L."/>
            <person name="Coutinho P.M."/>
            <person name="Henrissat B."/>
            <person name="Crock L.W."/>
            <person name="Russell A."/>
            <person name="Verberkmoes N.C."/>
            <person name="Hettich R.L."/>
            <person name="Gordon J.I."/>
        </authorList>
    </citation>
    <scope>NUCLEOTIDE SEQUENCE [LARGE SCALE GENOMIC DNA]</scope>
    <source>
        <strain>ATCC 33656 / DSM 3377 / JCM 17463 / KCTC 5835 / LMG 30912 / VPI 0990</strain>
    </source>
</reference>
<proteinExistence type="inferred from homology"/>
<keyword id="KW-0067">ATP-binding</keyword>
<keyword id="KW-0436">Ligase</keyword>
<keyword id="KW-0547">Nucleotide-binding</keyword>
<keyword id="KW-0554">One-carbon metabolism</keyword>
<sequence>MKTDIQIAQEATMLPIKDVAASIGIEEDDLELYGKYKAKISDELINRTKKNPDGKLILVTAINPTPAGEGKTTTSVGLGEAFGRLGKKALIALREPSLGPCFGIKGGAAGGGYAQVVPMEDLNLHFTGDFHAITSANNLLAALLDNHIQQGNELGIDPRQIVWKRCMDMNDRVLRNIVVGLGSKMDGMVREDHFVITVASEIMAILCLADDMADLKKRLGRIIVAYTFDGKPVTADDLQATGSMAALLKDALKPNLIQTLEHTPAIVHGGPFANIAHGCNSVRATKTALKLADYVITEAGFGADLGAEKFFDIKCRMAGLKPDAVVLVATIRALKYNGGVPKDELSSENLDALKAGIVNLEKHIENLHKFGVPVVVTLNSFVTDTKAETDFVEQFCKERGCEFALSEVWEKGGEGGIDLANKVLETIEHKESNFKVLYDDSLSLKEKIETVAKEIYGADGVTYSPAAERELKRITDLGMGDFPVCMAKTQYSLSDDAKKLGRPSGFKINVREVYASAGAGFVVAVNGSIMTMPGLSKKPAAYGIDVDDNGVITGLF</sequence>
<comment type="catalytic activity">
    <reaction evidence="1">
        <text>(6S)-5,6,7,8-tetrahydrofolate + formate + ATP = (6R)-10-formyltetrahydrofolate + ADP + phosphate</text>
        <dbReference type="Rhea" id="RHEA:20221"/>
        <dbReference type="ChEBI" id="CHEBI:15740"/>
        <dbReference type="ChEBI" id="CHEBI:30616"/>
        <dbReference type="ChEBI" id="CHEBI:43474"/>
        <dbReference type="ChEBI" id="CHEBI:57453"/>
        <dbReference type="ChEBI" id="CHEBI:195366"/>
        <dbReference type="ChEBI" id="CHEBI:456216"/>
        <dbReference type="EC" id="6.3.4.3"/>
    </reaction>
</comment>
<comment type="pathway">
    <text evidence="1">One-carbon metabolism; tetrahydrofolate interconversion.</text>
</comment>
<comment type="similarity">
    <text evidence="1">Belongs to the formate--tetrahydrofolate ligase family.</text>
</comment>
<dbReference type="EC" id="6.3.4.3" evidence="1"/>
<dbReference type="EMBL" id="CP001107">
    <property type="protein sequence ID" value="ACR75700.1"/>
    <property type="molecule type" value="Genomic_DNA"/>
</dbReference>
<dbReference type="RefSeq" id="WP_012742797.1">
    <property type="nucleotide sequence ID" value="NC_012781.1"/>
</dbReference>
<dbReference type="SMR" id="C4ZBG8"/>
<dbReference type="STRING" id="515619.EUBREC_1958"/>
<dbReference type="PaxDb" id="515619-EUBREC_1958"/>
<dbReference type="KEGG" id="ere:EUBREC_1958"/>
<dbReference type="HOGENOM" id="CLU_003601_3_3_9"/>
<dbReference type="UniPathway" id="UPA00193"/>
<dbReference type="Proteomes" id="UP000001477">
    <property type="component" value="Chromosome"/>
</dbReference>
<dbReference type="GO" id="GO:0005524">
    <property type="term" value="F:ATP binding"/>
    <property type="evidence" value="ECO:0007669"/>
    <property type="project" value="UniProtKB-UniRule"/>
</dbReference>
<dbReference type="GO" id="GO:0004329">
    <property type="term" value="F:formate-tetrahydrofolate ligase activity"/>
    <property type="evidence" value="ECO:0007669"/>
    <property type="project" value="UniProtKB-UniRule"/>
</dbReference>
<dbReference type="GO" id="GO:0035999">
    <property type="term" value="P:tetrahydrofolate interconversion"/>
    <property type="evidence" value="ECO:0007669"/>
    <property type="project" value="UniProtKB-UniRule"/>
</dbReference>
<dbReference type="CDD" id="cd00477">
    <property type="entry name" value="FTHFS"/>
    <property type="match status" value="1"/>
</dbReference>
<dbReference type="FunFam" id="3.30.1510.10:FF:000001">
    <property type="entry name" value="Formate--tetrahydrofolate ligase"/>
    <property type="match status" value="1"/>
</dbReference>
<dbReference type="FunFam" id="3.10.410.10:FF:000001">
    <property type="entry name" value="Putative formate--tetrahydrofolate ligase"/>
    <property type="match status" value="1"/>
</dbReference>
<dbReference type="Gene3D" id="3.30.1510.10">
    <property type="entry name" value="Domain 2, N(10)-formyltetrahydrofolate synthetase"/>
    <property type="match status" value="1"/>
</dbReference>
<dbReference type="Gene3D" id="3.10.410.10">
    <property type="entry name" value="Formyltetrahydrofolate synthetase, domain 3"/>
    <property type="match status" value="1"/>
</dbReference>
<dbReference type="Gene3D" id="3.40.50.300">
    <property type="entry name" value="P-loop containing nucleotide triphosphate hydrolases"/>
    <property type="match status" value="1"/>
</dbReference>
<dbReference type="HAMAP" id="MF_01543">
    <property type="entry name" value="FTHFS"/>
    <property type="match status" value="1"/>
</dbReference>
<dbReference type="InterPro" id="IPR000559">
    <property type="entry name" value="Formate_THF_ligase"/>
</dbReference>
<dbReference type="InterPro" id="IPR020628">
    <property type="entry name" value="Formate_THF_ligase_CS"/>
</dbReference>
<dbReference type="InterPro" id="IPR027417">
    <property type="entry name" value="P-loop_NTPase"/>
</dbReference>
<dbReference type="NCBIfam" id="NF010030">
    <property type="entry name" value="PRK13505.1"/>
    <property type="match status" value="1"/>
</dbReference>
<dbReference type="Pfam" id="PF01268">
    <property type="entry name" value="FTHFS"/>
    <property type="match status" value="1"/>
</dbReference>
<dbReference type="SUPFAM" id="SSF52540">
    <property type="entry name" value="P-loop containing nucleoside triphosphate hydrolases"/>
    <property type="match status" value="1"/>
</dbReference>
<dbReference type="PROSITE" id="PS00721">
    <property type="entry name" value="FTHFS_1"/>
    <property type="match status" value="1"/>
</dbReference>
<dbReference type="PROSITE" id="PS00722">
    <property type="entry name" value="FTHFS_2"/>
    <property type="match status" value="1"/>
</dbReference>
<feature type="chain" id="PRO_1000215436" description="Formate--tetrahydrofolate ligase">
    <location>
        <begin position="1"/>
        <end position="556"/>
    </location>
</feature>
<feature type="binding site" evidence="1">
    <location>
        <begin position="65"/>
        <end position="72"/>
    </location>
    <ligand>
        <name>ATP</name>
        <dbReference type="ChEBI" id="CHEBI:30616"/>
    </ligand>
</feature>
<organism>
    <name type="scientific">Agathobacter rectalis (strain ATCC 33656 / DSM 3377 / JCM 17463 / KCTC 5835 / VPI 0990)</name>
    <name type="common">Eubacterium rectale</name>
    <dbReference type="NCBI Taxonomy" id="515619"/>
    <lineage>
        <taxon>Bacteria</taxon>
        <taxon>Bacillati</taxon>
        <taxon>Bacillota</taxon>
        <taxon>Clostridia</taxon>
        <taxon>Lachnospirales</taxon>
        <taxon>Lachnospiraceae</taxon>
        <taxon>Agathobacter</taxon>
    </lineage>
</organism>
<evidence type="ECO:0000255" key="1">
    <source>
        <dbReference type="HAMAP-Rule" id="MF_01543"/>
    </source>
</evidence>
<protein>
    <recommendedName>
        <fullName evidence="1">Formate--tetrahydrofolate ligase</fullName>
        <ecNumber evidence="1">6.3.4.3</ecNumber>
    </recommendedName>
    <alternativeName>
        <fullName evidence="1">Formyltetrahydrofolate synthetase</fullName>
        <shortName evidence="1">FHS</shortName>
        <shortName evidence="1">FTHFS</shortName>
    </alternativeName>
</protein>